<reference key="1">
    <citation type="journal article" date="2000" name="Immunity">
        <title>Control of B cell production by the adaptor protein lnk. Definition Of a conserved family of signal-modulating proteins.</title>
        <authorList>
            <person name="Takaki S."/>
            <person name="Sauer K."/>
            <person name="Iritani B.M."/>
            <person name="Chien S."/>
            <person name="Ebihara Y."/>
            <person name="Tsuji K."/>
            <person name="Takatsu K."/>
            <person name="Perlmutter R.M."/>
        </authorList>
    </citation>
    <scope>NUCLEOTIDE SEQUENCE [MRNA]</scope>
    <source>
        <strain>129/Sv</strain>
    </source>
</reference>
<reference key="2">
    <citation type="journal article" date="2004" name="Genome Res.">
        <title>The status, quality, and expansion of the NIH full-length cDNA project: the Mammalian Gene Collection (MGC).</title>
        <authorList>
            <consortium name="The MGC Project Team"/>
        </authorList>
    </citation>
    <scope>NUCLEOTIDE SEQUENCE [LARGE SCALE MRNA]</scope>
    <source>
        <strain>FVB/N</strain>
        <tissue>Mammary gland</tissue>
    </source>
</reference>
<reference key="3">
    <citation type="journal article" date="2010" name="Cell">
        <title>A tissue-specific atlas of mouse protein phosphorylation and expression.</title>
        <authorList>
            <person name="Huttlin E.L."/>
            <person name="Jedrychowski M.P."/>
            <person name="Elias J.E."/>
            <person name="Goswami T."/>
            <person name="Rad R."/>
            <person name="Beausoleil S.A."/>
            <person name="Villen J."/>
            <person name="Haas W."/>
            <person name="Sowa M.E."/>
            <person name="Gygi S.P."/>
        </authorList>
    </citation>
    <scope>PHOSPHORYLATION [LARGE SCALE ANALYSIS] AT SER-13 AND SER-302</scope>
    <scope>IDENTIFICATION BY MASS SPECTROMETRY [LARGE SCALE ANALYSIS]</scope>
    <source>
        <tissue>Kidney</tissue>
        <tissue>Lung</tissue>
        <tissue>Spleen</tissue>
        <tissue>Testis</tissue>
    </source>
</reference>
<sequence length="548" mass="60487">MNEPTVQPSRTSSAPASPASPRGWSDFCEQHAAAAARELARQYWLFARAHPQPPRADLVSLQFAELFQRHFCREVRESLAGPPGHDYRATAPPRPALPKARSSEDLGPRPACALQHLRRGLRQLFRRRSAGELPGATSDTNDIDTTAASRPGPARKLLPWGLREPPTEALKEVVLRYSLADEAAMDSGARWQRGRLVLRSPGPGHSHFLQLFDPPKSSKPKLQEACSSIREVRPCTRLEMPDNLYTFVLKVQDQTDIIFEVGDEQQLNSWLAELRASTGLGLEHPDTELPLSLAAEPGPARSPRGSTDSLDQGASPGVLLDPACQKTDHFLSCYPWFHGPISRVRAAQLVQLQGPDAHGVFLVRQSESRRGEYVLTFNLQGRAKHLRLVLTERGQCRVQHLHFPSVVDMLRHFQRSPIPLECGAACDVRLSGYVVVLSQAPGSSNTVLFPFSLPHWDSELGHPHLSSVGCPPSHGAEALPGQVTPPEQIFHLVPSPEELANSLRQLELESVSSARDSDYDMDSSSRGHLRAIDNQYTPLSQLCREADV</sequence>
<dbReference type="EMBL" id="U89992">
    <property type="protein sequence ID" value="AAB58580.2"/>
    <property type="molecule type" value="mRNA"/>
</dbReference>
<dbReference type="EMBL" id="U89993">
    <property type="protein sequence ID" value="AAB58581.1"/>
    <property type="molecule type" value="Genomic_DNA"/>
</dbReference>
<dbReference type="EMBL" id="BC006759">
    <property type="protein sequence ID" value="AAH06759.1"/>
    <property type="molecule type" value="mRNA"/>
</dbReference>
<dbReference type="CCDS" id="CCDS19641.1"/>
<dbReference type="RefSeq" id="NP_001293055.1">
    <property type="nucleotide sequence ID" value="NM_001306126.2"/>
</dbReference>
<dbReference type="RefSeq" id="NP_001293056.1">
    <property type="nucleotide sequence ID" value="NM_001306127.2"/>
</dbReference>
<dbReference type="RefSeq" id="NP_032533.1">
    <property type="nucleotide sequence ID" value="NM_008507.5"/>
</dbReference>
<dbReference type="RefSeq" id="XP_006530233.1">
    <property type="nucleotide sequence ID" value="XM_006530170.5"/>
</dbReference>
<dbReference type="RefSeq" id="XP_006530234.1">
    <property type="nucleotide sequence ID" value="XM_006530171.5"/>
</dbReference>
<dbReference type="RefSeq" id="XP_006530235.1">
    <property type="nucleotide sequence ID" value="XM_006530172.1"/>
</dbReference>
<dbReference type="RefSeq" id="XP_006530236.1">
    <property type="nucleotide sequence ID" value="XM_006530173.5"/>
</dbReference>
<dbReference type="RefSeq" id="XP_036020726.1">
    <property type="nucleotide sequence ID" value="XM_036164833.1"/>
</dbReference>
<dbReference type="PDB" id="7R8W">
    <property type="method" value="X-ray"/>
    <property type="resolution" value="1.90 A"/>
    <property type="chains" value="A=325-437"/>
</dbReference>
<dbReference type="PDB" id="7R8X">
    <property type="method" value="X-ray"/>
    <property type="resolution" value="2.30 A"/>
    <property type="chains" value="A=328-438"/>
</dbReference>
<dbReference type="PDBsum" id="7R8W"/>
<dbReference type="PDBsum" id="7R8X"/>
<dbReference type="SMR" id="O09039"/>
<dbReference type="BioGRID" id="201186">
    <property type="interactions" value="5"/>
</dbReference>
<dbReference type="FunCoup" id="O09039">
    <property type="interactions" value="1205"/>
</dbReference>
<dbReference type="STRING" id="10090.ENSMUSP00000083490"/>
<dbReference type="GlyGen" id="O09039">
    <property type="glycosylation" value="1 site"/>
</dbReference>
<dbReference type="iPTMnet" id="O09039"/>
<dbReference type="PhosphoSitePlus" id="O09039"/>
<dbReference type="jPOST" id="O09039"/>
<dbReference type="PaxDb" id="10090-ENSMUSP00000113926"/>
<dbReference type="ProteomicsDB" id="261210"/>
<dbReference type="Antibodypedia" id="1179">
    <property type="antibodies" value="271 antibodies from 35 providers"/>
</dbReference>
<dbReference type="DNASU" id="16923"/>
<dbReference type="Ensembl" id="ENSMUST00000040308.14">
    <property type="protein sequence ID" value="ENSMUSP00000041611.8"/>
    <property type="gene ID" value="ENSMUSG00000042594.17"/>
</dbReference>
<dbReference type="Ensembl" id="ENSMUST00000086310.8">
    <property type="protein sequence ID" value="ENSMUSP00000083490.2"/>
    <property type="gene ID" value="ENSMUSG00000042594.17"/>
</dbReference>
<dbReference type="Ensembl" id="ENSMUST00000122426.8">
    <property type="protein sequence ID" value="ENSMUSP00000113926.2"/>
    <property type="gene ID" value="ENSMUSG00000042594.17"/>
</dbReference>
<dbReference type="GeneID" id="16923"/>
<dbReference type="KEGG" id="mmu:16923"/>
<dbReference type="UCSC" id="uc008zkg.1">
    <property type="organism name" value="mouse"/>
</dbReference>
<dbReference type="AGR" id="MGI:893598"/>
<dbReference type="CTD" id="10019"/>
<dbReference type="MGI" id="MGI:893598">
    <property type="gene designation" value="Sh2b3"/>
</dbReference>
<dbReference type="VEuPathDB" id="HostDB:ENSMUSG00000042594"/>
<dbReference type="eggNOG" id="ENOG502QS89">
    <property type="taxonomic scope" value="Eukaryota"/>
</dbReference>
<dbReference type="GeneTree" id="ENSGT00950000183191"/>
<dbReference type="InParanoid" id="O09039"/>
<dbReference type="OMA" id="WLRSRSM"/>
<dbReference type="OrthoDB" id="10047184at2759"/>
<dbReference type="PhylomeDB" id="O09039"/>
<dbReference type="TreeFam" id="TF323184"/>
<dbReference type="Reactome" id="R-MMU-1433559">
    <property type="pathway name" value="Regulation of KIT signaling"/>
</dbReference>
<dbReference type="Reactome" id="R-MMU-9706369">
    <property type="pathway name" value="Negative regulation of FLT3"/>
</dbReference>
<dbReference type="Reactome" id="R-MMU-983231">
    <property type="pathway name" value="Factors involved in megakaryocyte development and platelet production"/>
</dbReference>
<dbReference type="BioGRID-ORCS" id="16923">
    <property type="hits" value="2 hits in 81 CRISPR screens"/>
</dbReference>
<dbReference type="ChiTaRS" id="Sh2b3">
    <property type="organism name" value="mouse"/>
</dbReference>
<dbReference type="PRO" id="PR:O09039"/>
<dbReference type="Proteomes" id="UP000000589">
    <property type="component" value="Chromosome 5"/>
</dbReference>
<dbReference type="RNAct" id="O09039">
    <property type="molecule type" value="protein"/>
</dbReference>
<dbReference type="Bgee" id="ENSMUSG00000042594">
    <property type="expression patterns" value="Expressed in granulocyte and 212 other cell types or tissues"/>
</dbReference>
<dbReference type="ExpressionAtlas" id="O09039">
    <property type="expression patterns" value="baseline and differential"/>
</dbReference>
<dbReference type="GO" id="GO:1990782">
    <property type="term" value="F:protein tyrosine kinase binding"/>
    <property type="evidence" value="ECO:0000353"/>
    <property type="project" value="BHF-UCL"/>
</dbReference>
<dbReference type="GO" id="GO:0030159">
    <property type="term" value="F:signaling receptor complex adaptor activity"/>
    <property type="evidence" value="ECO:0000353"/>
    <property type="project" value="BHF-UCL"/>
</dbReference>
<dbReference type="GO" id="GO:0005173">
    <property type="term" value="F:stem cell factor receptor binding"/>
    <property type="evidence" value="ECO:0000314"/>
    <property type="project" value="BHF-UCL"/>
</dbReference>
<dbReference type="GO" id="GO:1990869">
    <property type="term" value="P:cellular response to chemokine"/>
    <property type="evidence" value="ECO:0000315"/>
    <property type="project" value="ARUK-UCL"/>
</dbReference>
<dbReference type="GO" id="GO:0036016">
    <property type="term" value="P:cellular response to interleukin-3"/>
    <property type="evidence" value="ECO:0000314"/>
    <property type="project" value="ARUK-UCL"/>
</dbReference>
<dbReference type="GO" id="GO:0035162">
    <property type="term" value="P:embryonic hemopoiesis"/>
    <property type="evidence" value="ECO:0000314"/>
    <property type="project" value="MGI"/>
</dbReference>
<dbReference type="GO" id="GO:0048821">
    <property type="term" value="P:erythrocyte development"/>
    <property type="evidence" value="ECO:0007669"/>
    <property type="project" value="Ensembl"/>
</dbReference>
<dbReference type="GO" id="GO:0060218">
    <property type="term" value="P:hematopoietic stem cell differentiation"/>
    <property type="evidence" value="ECO:0000315"/>
    <property type="project" value="MGI"/>
</dbReference>
<dbReference type="GO" id="GO:0030097">
    <property type="term" value="P:hemopoiesis"/>
    <property type="evidence" value="ECO:0000315"/>
    <property type="project" value="MGI"/>
</dbReference>
<dbReference type="GO" id="GO:0035556">
    <property type="term" value="P:intracellular signal transduction"/>
    <property type="evidence" value="ECO:0000314"/>
    <property type="project" value="MGI"/>
</dbReference>
<dbReference type="GO" id="GO:0035855">
    <property type="term" value="P:megakaryocyte development"/>
    <property type="evidence" value="ECO:0000315"/>
    <property type="project" value="ARUK-UCL"/>
</dbReference>
<dbReference type="GO" id="GO:0035702">
    <property type="term" value="P:monocyte homeostasis"/>
    <property type="evidence" value="ECO:0000316"/>
    <property type="project" value="BHF-UCL"/>
</dbReference>
<dbReference type="GO" id="GO:0008285">
    <property type="term" value="P:negative regulation of cell population proliferation"/>
    <property type="evidence" value="ECO:0000315"/>
    <property type="project" value="ARUK-UCL"/>
</dbReference>
<dbReference type="GO" id="GO:0070100">
    <property type="term" value="P:negative regulation of chemokine-mediated signaling pathway"/>
    <property type="evidence" value="ECO:0000315"/>
    <property type="project" value="ARUK-UCL"/>
</dbReference>
<dbReference type="GO" id="GO:1900235">
    <property type="term" value="P:negative regulation of Kit signaling pathway"/>
    <property type="evidence" value="ECO:0000315"/>
    <property type="project" value="BHF-UCL"/>
</dbReference>
<dbReference type="GO" id="GO:0043409">
    <property type="term" value="P:negative regulation of MAPK cascade"/>
    <property type="evidence" value="ECO:0000315"/>
    <property type="project" value="ARUK-UCL"/>
</dbReference>
<dbReference type="GO" id="GO:0051898">
    <property type="term" value="P:negative regulation of phosphatidylinositol 3-kinase/protein kinase B signal transduction"/>
    <property type="evidence" value="ECO:0000314"/>
    <property type="project" value="ARUK-UCL"/>
</dbReference>
<dbReference type="GO" id="GO:0090331">
    <property type="term" value="P:negative regulation of platelet aggregation"/>
    <property type="evidence" value="ECO:0000316"/>
    <property type="project" value="BHF-UCL"/>
</dbReference>
<dbReference type="GO" id="GO:0046426">
    <property type="term" value="P:negative regulation of receptor signaling pathway via JAK-STAT"/>
    <property type="evidence" value="ECO:0007669"/>
    <property type="project" value="Ensembl"/>
</dbReference>
<dbReference type="GO" id="GO:1904893">
    <property type="term" value="P:negative regulation of receptor signaling pathway via STAT"/>
    <property type="evidence" value="ECO:0000315"/>
    <property type="project" value="ARUK-UCL"/>
</dbReference>
<dbReference type="GO" id="GO:0001780">
    <property type="term" value="P:neutrophil homeostasis"/>
    <property type="evidence" value="ECO:0000316"/>
    <property type="project" value="BHF-UCL"/>
</dbReference>
<dbReference type="GO" id="GO:0038163">
    <property type="term" value="P:thrombopoietin-mediated signaling pathway"/>
    <property type="evidence" value="ECO:0000315"/>
    <property type="project" value="ARUK-UCL"/>
</dbReference>
<dbReference type="CDD" id="cd01231">
    <property type="entry name" value="PH_SH2B_family"/>
    <property type="match status" value="1"/>
</dbReference>
<dbReference type="CDD" id="cd10412">
    <property type="entry name" value="SH2_SH2B3"/>
    <property type="match status" value="1"/>
</dbReference>
<dbReference type="FunFam" id="3.30.505.10:FF:000008">
    <property type="entry name" value="SH2B adapter protein 1 isoform 2"/>
    <property type="match status" value="1"/>
</dbReference>
<dbReference type="FunFam" id="2.30.29.30:FF:000299">
    <property type="entry name" value="SH2B adapter protein 3 isoform X2"/>
    <property type="match status" value="1"/>
</dbReference>
<dbReference type="Gene3D" id="6.10.140.110">
    <property type="match status" value="1"/>
</dbReference>
<dbReference type="Gene3D" id="2.30.29.30">
    <property type="entry name" value="Pleckstrin-homology domain (PH domain)/Phosphotyrosine-binding domain (PTB)"/>
    <property type="match status" value="1"/>
</dbReference>
<dbReference type="Gene3D" id="3.30.505.10">
    <property type="entry name" value="SH2 domain"/>
    <property type="match status" value="1"/>
</dbReference>
<dbReference type="InterPro" id="IPR011993">
    <property type="entry name" value="PH-like_dom_sf"/>
</dbReference>
<dbReference type="InterPro" id="IPR015012">
    <property type="entry name" value="Phe_ZIP"/>
</dbReference>
<dbReference type="InterPro" id="IPR036290">
    <property type="entry name" value="Phe_ZIP_sf"/>
</dbReference>
<dbReference type="InterPro" id="IPR000980">
    <property type="entry name" value="SH2"/>
</dbReference>
<dbReference type="InterPro" id="IPR036860">
    <property type="entry name" value="SH2_dom_sf"/>
</dbReference>
<dbReference type="InterPro" id="IPR030523">
    <property type="entry name" value="SH2B"/>
</dbReference>
<dbReference type="InterPro" id="IPR035059">
    <property type="entry name" value="SH2B3_SH2"/>
</dbReference>
<dbReference type="PANTHER" id="PTHR10872">
    <property type="entry name" value="SH2B ADAPTER PROTEIN"/>
    <property type="match status" value="1"/>
</dbReference>
<dbReference type="PANTHER" id="PTHR10872:SF1">
    <property type="entry name" value="SH2B ADAPTER PROTEIN 3"/>
    <property type="match status" value="1"/>
</dbReference>
<dbReference type="Pfam" id="PF08916">
    <property type="entry name" value="Phe_ZIP"/>
    <property type="match status" value="1"/>
</dbReference>
<dbReference type="Pfam" id="PF00017">
    <property type="entry name" value="SH2"/>
    <property type="match status" value="1"/>
</dbReference>
<dbReference type="PRINTS" id="PR00401">
    <property type="entry name" value="SH2DOMAIN"/>
</dbReference>
<dbReference type="SMART" id="SM00252">
    <property type="entry name" value="SH2"/>
    <property type="match status" value="1"/>
</dbReference>
<dbReference type="SUPFAM" id="SSF50729">
    <property type="entry name" value="PH domain-like"/>
    <property type="match status" value="1"/>
</dbReference>
<dbReference type="SUPFAM" id="SSF109805">
    <property type="entry name" value="Phenylalanine zipper"/>
    <property type="match status" value="1"/>
</dbReference>
<dbReference type="SUPFAM" id="SSF55550">
    <property type="entry name" value="SH2 domain"/>
    <property type="match status" value="1"/>
</dbReference>
<dbReference type="PROSITE" id="PS50001">
    <property type="entry name" value="SH2"/>
    <property type="match status" value="1"/>
</dbReference>
<organism>
    <name type="scientific">Mus musculus</name>
    <name type="common">Mouse</name>
    <dbReference type="NCBI Taxonomy" id="10090"/>
    <lineage>
        <taxon>Eukaryota</taxon>
        <taxon>Metazoa</taxon>
        <taxon>Chordata</taxon>
        <taxon>Craniata</taxon>
        <taxon>Vertebrata</taxon>
        <taxon>Euteleostomi</taxon>
        <taxon>Mammalia</taxon>
        <taxon>Eutheria</taxon>
        <taxon>Euarchontoglires</taxon>
        <taxon>Glires</taxon>
        <taxon>Rodentia</taxon>
        <taxon>Myomorpha</taxon>
        <taxon>Muroidea</taxon>
        <taxon>Muridae</taxon>
        <taxon>Murinae</taxon>
        <taxon>Mus</taxon>
        <taxon>Mus</taxon>
    </lineage>
</organism>
<proteinExistence type="evidence at protein level"/>
<protein>
    <recommendedName>
        <fullName>SH2B adapter protein 3</fullName>
    </recommendedName>
    <alternativeName>
        <fullName>Lymphocyte adapter protein</fullName>
    </alternativeName>
    <alternativeName>
        <fullName>Lymphocyte-specific adapter protein Lnk</fullName>
    </alternativeName>
    <alternativeName>
        <fullName>Signal transduction protein Lnk</fullName>
    </alternativeName>
</protein>
<keyword id="KW-0002">3D-structure</keyword>
<keyword id="KW-0597">Phosphoprotein</keyword>
<keyword id="KW-1185">Reference proteome</keyword>
<keyword id="KW-0727">SH2 domain</keyword>
<accession>O09039</accession>
<comment type="function">
    <text evidence="1">Links T-cell receptor activation signal to phospholipase C-gamma-1, GRB2 and phosphatidylinositol 3-kinase.</text>
</comment>
<comment type="PTM">
    <text evidence="1">Tyrosine phosphorylated.</text>
</comment>
<comment type="similarity">
    <text evidence="5">Belongs to the SH2B adapter family.</text>
</comment>
<gene>
    <name type="primary">Sh2b3</name>
    <name type="synonym">Lnk</name>
</gene>
<name>SH2B3_MOUSE</name>
<feature type="chain" id="PRO_0000084455" description="SH2B adapter protein 3">
    <location>
        <begin position="1"/>
        <end position="548"/>
    </location>
</feature>
<feature type="domain" description="PH">
    <location>
        <begin position="168"/>
        <end position="279"/>
    </location>
</feature>
<feature type="domain" description="SH2" evidence="3">
    <location>
        <begin position="336"/>
        <end position="434"/>
    </location>
</feature>
<feature type="region of interest" description="Disordered" evidence="4">
    <location>
        <begin position="1"/>
        <end position="25"/>
    </location>
</feature>
<feature type="region of interest" description="Disordered" evidence="4">
    <location>
        <begin position="78"/>
        <end position="108"/>
    </location>
</feature>
<feature type="region of interest" description="Disordered" evidence="4">
    <location>
        <begin position="128"/>
        <end position="160"/>
    </location>
</feature>
<feature type="region of interest" description="Disordered" evidence="4">
    <location>
        <begin position="290"/>
        <end position="313"/>
    </location>
</feature>
<feature type="compositionally biased region" description="Polar residues" evidence="4">
    <location>
        <begin position="1"/>
        <end position="11"/>
    </location>
</feature>
<feature type="compositionally biased region" description="Low complexity" evidence="4">
    <location>
        <begin position="12"/>
        <end position="21"/>
    </location>
</feature>
<feature type="compositionally biased region" description="Polar residues" evidence="4">
    <location>
        <begin position="137"/>
        <end position="148"/>
    </location>
</feature>
<feature type="modified residue" description="Phosphoserine" evidence="6">
    <location>
        <position position="13"/>
    </location>
</feature>
<feature type="modified residue" description="Phosphoserine" evidence="2">
    <location>
        <position position="102"/>
    </location>
</feature>
<feature type="modified residue" description="Phosphoserine" evidence="2">
    <location>
        <position position="129"/>
    </location>
</feature>
<feature type="modified residue" description="Phosphoserine" evidence="6">
    <location>
        <position position="302"/>
    </location>
</feature>
<feature type="helix" evidence="7">
    <location>
        <begin position="327"/>
        <end position="331"/>
    </location>
</feature>
<feature type="helix" evidence="7">
    <location>
        <begin position="343"/>
        <end position="351"/>
    </location>
</feature>
<feature type="helix" evidence="7">
    <location>
        <begin position="354"/>
        <end position="357"/>
    </location>
</feature>
<feature type="strand" evidence="7">
    <location>
        <begin position="361"/>
        <end position="365"/>
    </location>
</feature>
<feature type="strand" evidence="7">
    <location>
        <begin position="367"/>
        <end position="369"/>
    </location>
</feature>
<feature type="strand" evidence="7">
    <location>
        <begin position="373"/>
        <end position="379"/>
    </location>
</feature>
<feature type="strand" evidence="7">
    <location>
        <begin position="382"/>
        <end position="390"/>
    </location>
</feature>
<feature type="strand" evidence="7">
    <location>
        <begin position="396"/>
        <end position="398"/>
    </location>
</feature>
<feature type="strand" evidence="7">
    <location>
        <begin position="401"/>
        <end position="405"/>
    </location>
</feature>
<feature type="helix" evidence="7">
    <location>
        <begin position="406"/>
        <end position="415"/>
    </location>
</feature>
<feature type="turn" evidence="7">
    <location>
        <begin position="421"/>
        <end position="425"/>
    </location>
</feature>
<evidence type="ECO:0000250" key="1"/>
<evidence type="ECO:0000250" key="2">
    <source>
        <dbReference type="UniProtKB" id="Q9UQQ2"/>
    </source>
</evidence>
<evidence type="ECO:0000255" key="3">
    <source>
        <dbReference type="PROSITE-ProRule" id="PRU00191"/>
    </source>
</evidence>
<evidence type="ECO:0000256" key="4">
    <source>
        <dbReference type="SAM" id="MobiDB-lite"/>
    </source>
</evidence>
<evidence type="ECO:0000305" key="5"/>
<evidence type="ECO:0007744" key="6">
    <source>
    </source>
</evidence>
<evidence type="ECO:0007829" key="7">
    <source>
        <dbReference type="PDB" id="7R8W"/>
    </source>
</evidence>